<organism>
    <name type="scientific">Priestia aryabhattai</name>
    <name type="common">Bacillus aryabhattai</name>
    <dbReference type="NCBI Taxonomy" id="412384"/>
    <lineage>
        <taxon>Bacteria</taxon>
        <taxon>Bacillati</taxon>
        <taxon>Bacillota</taxon>
        <taxon>Bacilli</taxon>
        <taxon>Bacillales</taxon>
        <taxon>Bacillaceae</taxon>
        <taxon>Priestia</taxon>
    </lineage>
</organism>
<name>SLAD_PRIAR</name>
<evidence type="ECO:0000250" key="1">
    <source>
        <dbReference type="UniProtKB" id="P25526"/>
    </source>
</evidence>
<evidence type="ECO:0000269" key="2">
    <source>
    </source>
</evidence>
<evidence type="ECO:0000303" key="3">
    <source>
    </source>
</evidence>
<evidence type="ECO:0000305" key="4"/>
<evidence type="ECO:0000312" key="5">
    <source>
        <dbReference type="EMBL" id="MBA9036995.1"/>
    </source>
</evidence>
<comment type="function">
    <text evidence="2">Part of the sulfo-TAL (or sulfo-SFT) pathway, a D-sulfoquinovose degradation pathway that produces sulfolactate (SL) (PubMed:32919372). Catalyzes the oxidation of 3-sulfolactaldehyde (SLA) to sulfolactate (SL) (PubMed:32919372).</text>
</comment>
<comment type="catalytic activity">
    <reaction evidence="2">
        <text>(2S)-3-sulfolactaldehyde + NAD(+) + H2O = (2S)-3-sulfolactate + NADH + 2 H(+)</text>
        <dbReference type="Rhea" id="RHEA:47932"/>
        <dbReference type="ChEBI" id="CHEBI:15377"/>
        <dbReference type="ChEBI" id="CHEBI:15378"/>
        <dbReference type="ChEBI" id="CHEBI:57540"/>
        <dbReference type="ChEBI" id="CHEBI:57945"/>
        <dbReference type="ChEBI" id="CHEBI:61289"/>
        <dbReference type="ChEBI" id="CHEBI:90109"/>
        <dbReference type="EC" id="1.2.1.97"/>
    </reaction>
    <physiologicalReaction direction="left-to-right" evidence="2">
        <dbReference type="Rhea" id="RHEA:47933"/>
    </physiologicalReaction>
</comment>
<comment type="induction">
    <text evidence="2">Induced by growth on sulfoquinovose.</text>
</comment>
<comment type="similarity">
    <text evidence="4">Belongs to the aldehyde dehydrogenase family.</text>
</comment>
<reference key="1">
    <citation type="submission" date="2020-08" db="EMBL/GenBank/DDBJ databases">
        <title>Functional genomics of gut bacteria from endangered species of beetles.</title>
        <authorList>
            <person name="Carlos-Shanley C."/>
        </authorList>
    </citation>
    <scope>NUCLEOTIDE SEQUENCE [LARGE SCALE GENOMIC DNA]</scope>
    <source>
        <strain>S00060</strain>
    </source>
</reference>
<reference key="2">
    <citation type="journal article" date="2020" name="IScience">
        <title>Environmental and Intestinal Phylum Firmicutes Bacteria Metabolize the Plant Sugar Sulfoquinovose via a 6-Deoxy-6-sulfofructose Transaldolase Pathway.</title>
        <authorList>
            <person name="Frommeyer B."/>
            <person name="Fiedler A.W."/>
            <person name="Oehler S.R."/>
            <person name="Hanson B.T."/>
            <person name="Loy A."/>
            <person name="Franchini P."/>
            <person name="Spiteller D."/>
            <person name="Schleheck D."/>
        </authorList>
    </citation>
    <scope>NUCLEOTIDE SEQUENCE [LARGE SCALE GENOMIC DNA]</scope>
    <scope>FUNCTION</scope>
    <scope>CATALYTIC ACTIVITY</scope>
    <scope>INDUCTION</scope>
    <source>
        <strain>SOS1</strain>
    </source>
</reference>
<accession>A0A7W3RCJ3</accession>
<sequence>MTSLTQVKQYGLYVNGEWETTAEKMEVLNKYTQQPAAEISVATKDDVNKAVASAKDALKNTFSPYERYEVLMKAADLLLSRQEEFAEILATEVGKSIRESRGEVERAATTLQISAEEAKRIHGEGVPVESAPGSENRMAFTVKVPVGVVAAITPFNVPINLVCHKLGPALAAGNSVVLKPAEVTPICALKLAELMEEAGLPKGRLQVLTGDGAEIGEWLLENQDVNMFTFTGSPRVGELIRSKAGLRKVSLELGNNSATIVHKDADLEKAASLISQKSFNNAGQVCISVQRIYVHTNIYTAFVNKLKEKTEKLVVGNPMDEQTDIGPMIRLKEAERVEEWVKEAVEEGAKIELGGKRDGAFYLPTILTNVNDDMKVCRQEVFGPAVAIAQYDEIDEVISKVNDSDYGLQAGLFTNDLQFAMKAAREIEVGGLIVNDASAYRVDHMPYGGVKKSGNGKEGPKYAIEEMTEERIIVLNL</sequence>
<dbReference type="EC" id="1.2.1.97" evidence="2"/>
<dbReference type="EMBL" id="JACJHT010000001">
    <property type="protein sequence ID" value="MBA9036995.1"/>
    <property type="molecule type" value="Genomic_DNA"/>
</dbReference>
<dbReference type="RefSeq" id="WP_013058330.1">
    <property type="nucleotide sequence ID" value="NZ_JACJHT010000001.1"/>
</dbReference>
<dbReference type="SMR" id="A0A7W3RCJ3"/>
<dbReference type="Proteomes" id="UP000543174">
    <property type="component" value="Unassembled WGS sequence"/>
</dbReference>
<dbReference type="GO" id="GO:0008911">
    <property type="term" value="F:lactaldehyde dehydrogenase (NAD+) activity"/>
    <property type="evidence" value="ECO:0007669"/>
    <property type="project" value="TreeGrafter"/>
</dbReference>
<dbReference type="CDD" id="cd07149">
    <property type="entry name" value="ALDH_y4uC"/>
    <property type="match status" value="1"/>
</dbReference>
<dbReference type="FunFam" id="3.40.309.10:FF:000009">
    <property type="entry name" value="Aldehyde dehydrogenase A"/>
    <property type="match status" value="1"/>
</dbReference>
<dbReference type="FunFam" id="3.40.605.10:FF:000007">
    <property type="entry name" value="NAD/NADP-dependent betaine aldehyde dehydrogenase"/>
    <property type="match status" value="1"/>
</dbReference>
<dbReference type="Gene3D" id="3.40.605.10">
    <property type="entry name" value="Aldehyde Dehydrogenase, Chain A, domain 1"/>
    <property type="match status" value="1"/>
</dbReference>
<dbReference type="Gene3D" id="3.40.309.10">
    <property type="entry name" value="Aldehyde Dehydrogenase, Chain A, domain 2"/>
    <property type="match status" value="1"/>
</dbReference>
<dbReference type="InterPro" id="IPR016161">
    <property type="entry name" value="Ald_DH/histidinol_DH"/>
</dbReference>
<dbReference type="InterPro" id="IPR016163">
    <property type="entry name" value="Ald_DH_C"/>
</dbReference>
<dbReference type="InterPro" id="IPR016162">
    <property type="entry name" value="Ald_DH_N"/>
</dbReference>
<dbReference type="InterPro" id="IPR015590">
    <property type="entry name" value="Aldehyde_DH_dom"/>
</dbReference>
<dbReference type="InterPro" id="IPR051020">
    <property type="entry name" value="ALDH-related_metabolic_enz"/>
</dbReference>
<dbReference type="PANTHER" id="PTHR42991">
    <property type="entry name" value="ALDEHYDE DEHYDROGENASE"/>
    <property type="match status" value="1"/>
</dbReference>
<dbReference type="PANTHER" id="PTHR42991:SF1">
    <property type="entry name" value="ALDEHYDE DEHYDROGENASE"/>
    <property type="match status" value="1"/>
</dbReference>
<dbReference type="Pfam" id="PF00171">
    <property type="entry name" value="Aldedh"/>
    <property type="match status" value="1"/>
</dbReference>
<dbReference type="SUPFAM" id="SSF53720">
    <property type="entry name" value="ALDH-like"/>
    <property type="match status" value="1"/>
</dbReference>
<feature type="chain" id="PRO_0000458973" description="3-sulfolactaldehyde dehydrogenase">
    <location>
        <begin position="1"/>
        <end position="477"/>
    </location>
</feature>
<feature type="active site" description="Proton acceptor" evidence="1">
    <location>
        <position position="252"/>
    </location>
</feature>
<feature type="active site" description="Nucleophile" evidence="1">
    <location>
        <position position="286"/>
    </location>
</feature>
<feature type="binding site" evidence="1">
    <location>
        <begin position="232"/>
        <end position="233"/>
    </location>
    <ligand>
        <name>NAD(+)</name>
        <dbReference type="ChEBI" id="CHEBI:57540"/>
    </ligand>
</feature>
<feature type="binding site" evidence="1">
    <location>
        <position position="253"/>
    </location>
    <ligand>
        <name>NAD(+)</name>
        <dbReference type="ChEBI" id="CHEBI:57540"/>
    </ligand>
</feature>
<feature type="binding site" evidence="1">
    <location>
        <position position="380"/>
    </location>
    <ligand>
        <name>NAD(+)</name>
        <dbReference type="ChEBI" id="CHEBI:57540"/>
    </ligand>
</feature>
<keyword id="KW-0119">Carbohydrate metabolism</keyword>
<keyword id="KW-0520">NAD</keyword>
<keyword id="KW-0560">Oxidoreductase</keyword>
<gene>
    <name evidence="3" type="primary">sftD</name>
    <name evidence="3" type="ORF">Ga0111075_10031325</name>
    <name evidence="5" type="ORF">HNP21_000084</name>
</gene>
<proteinExistence type="evidence at protein level"/>
<protein>
    <recommendedName>
        <fullName evidence="3">3-sulfolactaldehyde dehydrogenase</fullName>
        <shortName evidence="3">SLA dehydrogenase</shortName>
        <ecNumber evidence="2">1.2.1.97</ecNumber>
    </recommendedName>
</protein>